<dbReference type="EC" id="6.1.1.5" evidence="1"/>
<dbReference type="EMBL" id="CR936503">
    <property type="protein sequence ID" value="CAI55060.1"/>
    <property type="molecule type" value="Genomic_DNA"/>
</dbReference>
<dbReference type="RefSeq" id="WP_011374463.1">
    <property type="nucleotide sequence ID" value="NC_007576.1"/>
</dbReference>
<dbReference type="SMR" id="Q38XM0"/>
<dbReference type="STRING" id="314315.LCA_0756"/>
<dbReference type="KEGG" id="lsa:LCA_0756"/>
<dbReference type="eggNOG" id="COG0060">
    <property type="taxonomic scope" value="Bacteria"/>
</dbReference>
<dbReference type="HOGENOM" id="CLU_001493_7_2_9"/>
<dbReference type="OrthoDB" id="9810365at2"/>
<dbReference type="Proteomes" id="UP000002707">
    <property type="component" value="Chromosome"/>
</dbReference>
<dbReference type="GO" id="GO:0005829">
    <property type="term" value="C:cytosol"/>
    <property type="evidence" value="ECO:0007669"/>
    <property type="project" value="TreeGrafter"/>
</dbReference>
<dbReference type="GO" id="GO:0002161">
    <property type="term" value="F:aminoacyl-tRNA deacylase activity"/>
    <property type="evidence" value="ECO:0007669"/>
    <property type="project" value="InterPro"/>
</dbReference>
<dbReference type="GO" id="GO:0005524">
    <property type="term" value="F:ATP binding"/>
    <property type="evidence" value="ECO:0007669"/>
    <property type="project" value="UniProtKB-UniRule"/>
</dbReference>
<dbReference type="GO" id="GO:0004822">
    <property type="term" value="F:isoleucine-tRNA ligase activity"/>
    <property type="evidence" value="ECO:0007669"/>
    <property type="project" value="UniProtKB-UniRule"/>
</dbReference>
<dbReference type="GO" id="GO:0000049">
    <property type="term" value="F:tRNA binding"/>
    <property type="evidence" value="ECO:0007669"/>
    <property type="project" value="InterPro"/>
</dbReference>
<dbReference type="GO" id="GO:0008270">
    <property type="term" value="F:zinc ion binding"/>
    <property type="evidence" value="ECO:0007669"/>
    <property type="project" value="UniProtKB-UniRule"/>
</dbReference>
<dbReference type="GO" id="GO:0006428">
    <property type="term" value="P:isoleucyl-tRNA aminoacylation"/>
    <property type="evidence" value="ECO:0007669"/>
    <property type="project" value="UniProtKB-UniRule"/>
</dbReference>
<dbReference type="CDD" id="cd07960">
    <property type="entry name" value="Anticodon_Ia_Ile_BEm"/>
    <property type="match status" value="1"/>
</dbReference>
<dbReference type="CDD" id="cd00818">
    <property type="entry name" value="IleRS_core"/>
    <property type="match status" value="1"/>
</dbReference>
<dbReference type="FunFam" id="1.10.730.20:FF:000001">
    <property type="entry name" value="Isoleucine--tRNA ligase"/>
    <property type="match status" value="1"/>
</dbReference>
<dbReference type="FunFam" id="3.40.50.620:FF:000152">
    <property type="entry name" value="Isoleucine--tRNA ligase"/>
    <property type="match status" value="1"/>
</dbReference>
<dbReference type="FunFam" id="3.90.740.10:FF:000006">
    <property type="entry name" value="Isoleucine--tRNA ligase"/>
    <property type="match status" value="1"/>
</dbReference>
<dbReference type="Gene3D" id="1.10.730.20">
    <property type="match status" value="1"/>
</dbReference>
<dbReference type="Gene3D" id="3.40.50.620">
    <property type="entry name" value="HUPs"/>
    <property type="match status" value="2"/>
</dbReference>
<dbReference type="Gene3D" id="3.90.740.10">
    <property type="entry name" value="Valyl/Leucyl/Isoleucyl-tRNA synthetase, editing domain"/>
    <property type="match status" value="1"/>
</dbReference>
<dbReference type="HAMAP" id="MF_02002">
    <property type="entry name" value="Ile_tRNA_synth_type1"/>
    <property type="match status" value="1"/>
</dbReference>
<dbReference type="InterPro" id="IPR001412">
    <property type="entry name" value="aa-tRNA-synth_I_CS"/>
</dbReference>
<dbReference type="InterPro" id="IPR002300">
    <property type="entry name" value="aa-tRNA-synth_Ia"/>
</dbReference>
<dbReference type="InterPro" id="IPR033708">
    <property type="entry name" value="Anticodon_Ile_BEm"/>
</dbReference>
<dbReference type="InterPro" id="IPR002301">
    <property type="entry name" value="Ile-tRNA-ligase"/>
</dbReference>
<dbReference type="InterPro" id="IPR023585">
    <property type="entry name" value="Ile-tRNA-ligase_type1"/>
</dbReference>
<dbReference type="InterPro" id="IPR050081">
    <property type="entry name" value="Ile-tRNA_ligase"/>
</dbReference>
<dbReference type="InterPro" id="IPR013155">
    <property type="entry name" value="M/V/L/I-tRNA-synth_anticd-bd"/>
</dbReference>
<dbReference type="InterPro" id="IPR014729">
    <property type="entry name" value="Rossmann-like_a/b/a_fold"/>
</dbReference>
<dbReference type="InterPro" id="IPR009080">
    <property type="entry name" value="tRNAsynth_Ia_anticodon-bd"/>
</dbReference>
<dbReference type="InterPro" id="IPR009008">
    <property type="entry name" value="Val/Leu/Ile-tRNA-synth_edit"/>
</dbReference>
<dbReference type="InterPro" id="IPR010663">
    <property type="entry name" value="Znf_FPG/IleRS"/>
</dbReference>
<dbReference type="NCBIfam" id="TIGR00392">
    <property type="entry name" value="ileS"/>
    <property type="match status" value="1"/>
</dbReference>
<dbReference type="PANTHER" id="PTHR42765:SF1">
    <property type="entry name" value="ISOLEUCINE--TRNA LIGASE, MITOCHONDRIAL"/>
    <property type="match status" value="1"/>
</dbReference>
<dbReference type="PANTHER" id="PTHR42765">
    <property type="entry name" value="SOLEUCYL-TRNA SYNTHETASE"/>
    <property type="match status" value="1"/>
</dbReference>
<dbReference type="Pfam" id="PF08264">
    <property type="entry name" value="Anticodon_1"/>
    <property type="match status" value="1"/>
</dbReference>
<dbReference type="Pfam" id="PF00133">
    <property type="entry name" value="tRNA-synt_1"/>
    <property type="match status" value="1"/>
</dbReference>
<dbReference type="Pfam" id="PF06827">
    <property type="entry name" value="zf-FPG_IleRS"/>
    <property type="match status" value="1"/>
</dbReference>
<dbReference type="PRINTS" id="PR00984">
    <property type="entry name" value="TRNASYNTHILE"/>
</dbReference>
<dbReference type="SUPFAM" id="SSF47323">
    <property type="entry name" value="Anticodon-binding domain of a subclass of class I aminoacyl-tRNA synthetases"/>
    <property type="match status" value="1"/>
</dbReference>
<dbReference type="SUPFAM" id="SSF52374">
    <property type="entry name" value="Nucleotidylyl transferase"/>
    <property type="match status" value="1"/>
</dbReference>
<dbReference type="SUPFAM" id="SSF50677">
    <property type="entry name" value="ValRS/IleRS/LeuRS editing domain"/>
    <property type="match status" value="1"/>
</dbReference>
<dbReference type="PROSITE" id="PS00178">
    <property type="entry name" value="AA_TRNA_LIGASE_I"/>
    <property type="match status" value="1"/>
</dbReference>
<name>SYI_LATSS</name>
<evidence type="ECO:0000255" key="1">
    <source>
        <dbReference type="HAMAP-Rule" id="MF_02002"/>
    </source>
</evidence>
<protein>
    <recommendedName>
        <fullName evidence="1">Isoleucine--tRNA ligase</fullName>
        <ecNumber evidence="1">6.1.1.5</ecNumber>
    </recommendedName>
    <alternativeName>
        <fullName evidence="1">Isoleucyl-tRNA synthetase</fullName>
        <shortName evidence="1">IleRS</shortName>
    </alternativeName>
</protein>
<keyword id="KW-0030">Aminoacyl-tRNA synthetase</keyword>
<keyword id="KW-0067">ATP-binding</keyword>
<keyword id="KW-0963">Cytoplasm</keyword>
<keyword id="KW-0436">Ligase</keyword>
<keyword id="KW-0479">Metal-binding</keyword>
<keyword id="KW-0547">Nucleotide-binding</keyword>
<keyword id="KW-0648">Protein biosynthesis</keyword>
<keyword id="KW-1185">Reference proteome</keyword>
<keyword id="KW-0862">Zinc</keyword>
<gene>
    <name evidence="1" type="primary">ileS</name>
    <name type="ordered locus">LCA_0756</name>
</gene>
<sequence length="928" mass="104085">MRIKETLNLGKTAFPMRAGLPNREIDWQKGWADNNLYQQRQKLNEGKPSFVLHDGPPFANGNIHMGHALNKTSKDIIVRYKSMNGFRAPFVPGWDTHGLPIEQALAKKGIKRKEMSLVDYRKLCYDYAMEQVNTQRQDFKRLGISADWDNPYITLTADFEAEEIRVFGEMAKKGYIYKGKKPVYWSPSSESTLAEAEIEYKDIKSPSMYVAFNVVDGKDLLDADTKFIIWTTTPWTIPANLGIAVNPAFDYVQVLADGQKYVVAAERLNKMTDLLGWESVEILKTFKGADMELMTARHPLYDRESLVILGNHVTLETGTGLVHTAPGHGEDDYNAGTKYKLPVLSVVDSKGIMTEDAPGFEGVYYDKANPMVTEALEKNGSLLKLDFFTHSYPHDWRTKKPVIFRATAQWFASIDAFRDQILAQIEKVEFMPEWGKTRLYNMIRDRGDWVISRQRAWGVPLPIFYAEDGTEIITPETIERVAQLFAEHGSNVWFEWDAKDLLPAGFTHPGSPNGEFTKEKDIMDVWFDSGSSHQAVLAARDELTYPADLILEGSDQYRGWFNSSLITSVAVGEVSPYKAVISQGFVLDGNGRKMSKSLGNTILPEKIIKQMGADIVRLWVASVDASSDVKVTMENFQQVSEAYRKIRNTMRFMIANTTDFDPAKDTVDYAELGSVDKFMLVRLNAIIESCKAAYDAYDFATVYKTINMFLTNELSAFYLDFAKDVVYIDGQNDAPRRNMQTVFYAVAVALTKLLTPILPHTAEEIWSYLHEPEEFVQLAEMPEVAHFAGEEDLVATWNAFMGIRDDVLKALETARMDKVIGKSLEAAVTLYPNEANAALLASLDADVKQLLIVSQLTIADQAVEAPAEATQFDGVAVSVAHAEGDVCDRCRMIKTDVGSDDKFPMLCARCAAIVTANYPEAVAEGLEK</sequence>
<feature type="chain" id="PRO_1000022086" description="Isoleucine--tRNA ligase">
    <location>
        <begin position="1"/>
        <end position="928"/>
    </location>
</feature>
<feature type="short sequence motif" description="'HIGH' region">
    <location>
        <begin position="57"/>
        <end position="67"/>
    </location>
</feature>
<feature type="short sequence motif" description="'KMSKS' region">
    <location>
        <begin position="593"/>
        <end position="597"/>
    </location>
</feature>
<feature type="binding site" evidence="1">
    <location>
        <position position="552"/>
    </location>
    <ligand>
        <name>L-isoleucyl-5'-AMP</name>
        <dbReference type="ChEBI" id="CHEBI:178002"/>
    </ligand>
</feature>
<feature type="binding site" evidence="1">
    <location>
        <position position="596"/>
    </location>
    <ligand>
        <name>ATP</name>
        <dbReference type="ChEBI" id="CHEBI:30616"/>
    </ligand>
</feature>
<feature type="binding site" evidence="1">
    <location>
        <position position="887"/>
    </location>
    <ligand>
        <name>Zn(2+)</name>
        <dbReference type="ChEBI" id="CHEBI:29105"/>
    </ligand>
</feature>
<feature type="binding site" evidence="1">
    <location>
        <position position="890"/>
    </location>
    <ligand>
        <name>Zn(2+)</name>
        <dbReference type="ChEBI" id="CHEBI:29105"/>
    </ligand>
</feature>
<feature type="binding site" evidence="1">
    <location>
        <position position="907"/>
    </location>
    <ligand>
        <name>Zn(2+)</name>
        <dbReference type="ChEBI" id="CHEBI:29105"/>
    </ligand>
</feature>
<feature type="binding site" evidence="1">
    <location>
        <position position="910"/>
    </location>
    <ligand>
        <name>Zn(2+)</name>
        <dbReference type="ChEBI" id="CHEBI:29105"/>
    </ligand>
</feature>
<reference key="1">
    <citation type="journal article" date="2005" name="Nat. Biotechnol.">
        <title>The complete genome sequence of the meat-borne lactic acid bacterium Lactobacillus sakei 23K.</title>
        <authorList>
            <person name="Chaillou S."/>
            <person name="Champomier-Verges M.-C."/>
            <person name="Cornet M."/>
            <person name="Crutz-Le Coq A.-M."/>
            <person name="Dudez A.-M."/>
            <person name="Martin V."/>
            <person name="Beaufils S."/>
            <person name="Darbon-Rongere E."/>
            <person name="Bossy R."/>
            <person name="Loux V."/>
            <person name="Zagorec M."/>
        </authorList>
    </citation>
    <scope>NUCLEOTIDE SEQUENCE [LARGE SCALE GENOMIC DNA]</scope>
    <source>
        <strain>23K</strain>
    </source>
</reference>
<comment type="function">
    <text evidence="1">Catalyzes the attachment of isoleucine to tRNA(Ile). As IleRS can inadvertently accommodate and process structurally similar amino acids such as valine, to avoid such errors it has two additional distinct tRNA(Ile)-dependent editing activities. One activity is designated as 'pretransfer' editing and involves the hydrolysis of activated Val-AMP. The other activity is designated 'posttransfer' editing and involves deacylation of mischarged Val-tRNA(Ile).</text>
</comment>
<comment type="catalytic activity">
    <reaction evidence="1">
        <text>tRNA(Ile) + L-isoleucine + ATP = L-isoleucyl-tRNA(Ile) + AMP + diphosphate</text>
        <dbReference type="Rhea" id="RHEA:11060"/>
        <dbReference type="Rhea" id="RHEA-COMP:9666"/>
        <dbReference type="Rhea" id="RHEA-COMP:9695"/>
        <dbReference type="ChEBI" id="CHEBI:30616"/>
        <dbReference type="ChEBI" id="CHEBI:33019"/>
        <dbReference type="ChEBI" id="CHEBI:58045"/>
        <dbReference type="ChEBI" id="CHEBI:78442"/>
        <dbReference type="ChEBI" id="CHEBI:78528"/>
        <dbReference type="ChEBI" id="CHEBI:456215"/>
        <dbReference type="EC" id="6.1.1.5"/>
    </reaction>
</comment>
<comment type="cofactor">
    <cofactor evidence="1">
        <name>Zn(2+)</name>
        <dbReference type="ChEBI" id="CHEBI:29105"/>
    </cofactor>
    <text evidence="1">Binds 1 zinc ion per subunit.</text>
</comment>
<comment type="subunit">
    <text evidence="1">Monomer.</text>
</comment>
<comment type="subcellular location">
    <subcellularLocation>
        <location evidence="1">Cytoplasm</location>
    </subcellularLocation>
</comment>
<comment type="domain">
    <text evidence="1">IleRS has two distinct active sites: one for aminoacylation and one for editing. The misactivated valine is translocated from the active site to the editing site, which sterically excludes the correctly activated isoleucine. The single editing site contains two valyl binding pockets, one specific for each substrate (Val-AMP or Val-tRNA(Ile)).</text>
</comment>
<comment type="similarity">
    <text evidence="1">Belongs to the class-I aminoacyl-tRNA synthetase family. IleS type 1 subfamily.</text>
</comment>
<organism>
    <name type="scientific">Latilactobacillus sakei subsp. sakei (strain 23K)</name>
    <name type="common">Lactobacillus sakei subsp. sakei</name>
    <dbReference type="NCBI Taxonomy" id="314315"/>
    <lineage>
        <taxon>Bacteria</taxon>
        <taxon>Bacillati</taxon>
        <taxon>Bacillota</taxon>
        <taxon>Bacilli</taxon>
        <taxon>Lactobacillales</taxon>
        <taxon>Lactobacillaceae</taxon>
        <taxon>Latilactobacillus</taxon>
    </lineage>
</organism>
<proteinExistence type="inferred from homology"/>
<accession>Q38XM0</accession>